<keyword id="KW-0223">Dioxygenase</keyword>
<keyword id="KW-0408">Iron</keyword>
<keyword id="KW-0479">Metal-binding</keyword>
<keyword id="KW-0560">Oxidoreductase</keyword>
<keyword id="KW-1185">Reference proteome</keyword>
<keyword id="KW-0847">Vitamin C</keyword>
<gene>
    <name type="ordered locus">Bxeno_B2194</name>
    <name type="ORF">Bxe_B0792</name>
</gene>
<feature type="chain" id="PRO_0000346474" description="PKHD-type hydroxylase Bxeno_B2194">
    <location>
        <begin position="1"/>
        <end position="227"/>
    </location>
</feature>
<feature type="domain" description="Fe2OG dioxygenase" evidence="1">
    <location>
        <begin position="78"/>
        <end position="178"/>
    </location>
</feature>
<feature type="binding site" evidence="1">
    <location>
        <position position="96"/>
    </location>
    <ligand>
        <name>Fe cation</name>
        <dbReference type="ChEBI" id="CHEBI:24875"/>
    </ligand>
</feature>
<feature type="binding site" evidence="1">
    <location>
        <position position="98"/>
    </location>
    <ligand>
        <name>Fe cation</name>
        <dbReference type="ChEBI" id="CHEBI:24875"/>
    </ligand>
</feature>
<feature type="binding site" evidence="1">
    <location>
        <position position="159"/>
    </location>
    <ligand>
        <name>Fe cation</name>
        <dbReference type="ChEBI" id="CHEBI:24875"/>
    </ligand>
</feature>
<feature type="binding site" evidence="1">
    <location>
        <position position="169"/>
    </location>
    <ligand>
        <name>2-oxoglutarate</name>
        <dbReference type="ChEBI" id="CHEBI:16810"/>
    </ligand>
</feature>
<accession>Q13L77</accession>
<sequence>MMLHLQGVLSKQQVAQCREVLDAAQWIDGNVTSGEQSAQAKRNQQLPEGSAAARAVGDAIQDALGRNPRFFSAALPLKVFPPLFNRYAGGDGFATHVDNAIRQLRGTDFRIRSDLSATLFLAEPDTYEGGELCIEDTYGVHRARLPAGDMVLYPASSLHHVSPVTRGVRVASFFWIQSMVRDDGERATLFQLDNDVQRLAAEKGSNDATVVSLTGIYHNLLRRWADA</sequence>
<proteinExistence type="inferred from homology"/>
<organism>
    <name type="scientific">Paraburkholderia xenovorans (strain LB400)</name>
    <dbReference type="NCBI Taxonomy" id="266265"/>
    <lineage>
        <taxon>Bacteria</taxon>
        <taxon>Pseudomonadati</taxon>
        <taxon>Pseudomonadota</taxon>
        <taxon>Betaproteobacteria</taxon>
        <taxon>Burkholderiales</taxon>
        <taxon>Burkholderiaceae</taxon>
        <taxon>Paraburkholderia</taxon>
    </lineage>
</organism>
<protein>
    <recommendedName>
        <fullName evidence="1">PKHD-type hydroxylase Bxeno_B2194</fullName>
        <ecNumber evidence="1">1.14.11.-</ecNumber>
    </recommendedName>
</protein>
<comment type="cofactor">
    <cofactor evidence="1">
        <name>Fe(2+)</name>
        <dbReference type="ChEBI" id="CHEBI:29033"/>
    </cofactor>
    <text evidence="1">Binds 1 Fe(2+) ion per subunit.</text>
</comment>
<comment type="cofactor">
    <cofactor evidence="1">
        <name>L-ascorbate</name>
        <dbReference type="ChEBI" id="CHEBI:38290"/>
    </cofactor>
</comment>
<dbReference type="EC" id="1.14.11.-" evidence="1"/>
<dbReference type="EMBL" id="CP000271">
    <property type="protein sequence ID" value="ABE35162.1"/>
    <property type="molecule type" value="Genomic_DNA"/>
</dbReference>
<dbReference type="RefSeq" id="WP_011492462.1">
    <property type="nucleotide sequence ID" value="NC_007952.1"/>
</dbReference>
<dbReference type="SMR" id="Q13L77"/>
<dbReference type="STRING" id="266265.Bxe_B0792"/>
<dbReference type="KEGG" id="bxb:DR64_6117"/>
<dbReference type="KEGG" id="bxe:Bxe_B0792"/>
<dbReference type="PATRIC" id="fig|266265.5.peg.6991"/>
<dbReference type="eggNOG" id="COG3128">
    <property type="taxonomic scope" value="Bacteria"/>
</dbReference>
<dbReference type="OrthoDB" id="9812472at2"/>
<dbReference type="Proteomes" id="UP000001817">
    <property type="component" value="Chromosome 2"/>
</dbReference>
<dbReference type="GO" id="GO:0016706">
    <property type="term" value="F:2-oxoglutarate-dependent dioxygenase activity"/>
    <property type="evidence" value="ECO:0007669"/>
    <property type="project" value="UniProtKB-UniRule"/>
</dbReference>
<dbReference type="GO" id="GO:0005506">
    <property type="term" value="F:iron ion binding"/>
    <property type="evidence" value="ECO:0007669"/>
    <property type="project" value="UniProtKB-UniRule"/>
</dbReference>
<dbReference type="GO" id="GO:0031418">
    <property type="term" value="F:L-ascorbic acid binding"/>
    <property type="evidence" value="ECO:0007669"/>
    <property type="project" value="UniProtKB-KW"/>
</dbReference>
<dbReference type="GO" id="GO:0006974">
    <property type="term" value="P:DNA damage response"/>
    <property type="evidence" value="ECO:0007669"/>
    <property type="project" value="TreeGrafter"/>
</dbReference>
<dbReference type="GO" id="GO:0006879">
    <property type="term" value="P:intracellular iron ion homeostasis"/>
    <property type="evidence" value="ECO:0007669"/>
    <property type="project" value="TreeGrafter"/>
</dbReference>
<dbReference type="Gene3D" id="2.60.120.620">
    <property type="entry name" value="q2cbj1_9rhob like domain"/>
    <property type="match status" value="1"/>
</dbReference>
<dbReference type="Gene3D" id="4.10.860.20">
    <property type="entry name" value="Rabenosyn, Rab binding domain"/>
    <property type="match status" value="1"/>
</dbReference>
<dbReference type="HAMAP" id="MF_00657">
    <property type="entry name" value="Hydroxyl_YbiX"/>
    <property type="match status" value="1"/>
</dbReference>
<dbReference type="InterPro" id="IPR005123">
    <property type="entry name" value="Oxoglu/Fe-dep_dioxygenase_dom"/>
</dbReference>
<dbReference type="InterPro" id="IPR041097">
    <property type="entry name" value="PKHD_C"/>
</dbReference>
<dbReference type="InterPro" id="IPR023550">
    <property type="entry name" value="PKHD_hydroxylase"/>
</dbReference>
<dbReference type="InterPro" id="IPR006620">
    <property type="entry name" value="Pro_4_hyd_alph"/>
</dbReference>
<dbReference type="InterPro" id="IPR044862">
    <property type="entry name" value="Pro_4_hyd_alph_FE2OG_OXY"/>
</dbReference>
<dbReference type="NCBIfam" id="NF003973">
    <property type="entry name" value="PRK05467.1-2"/>
    <property type="match status" value="1"/>
</dbReference>
<dbReference type="NCBIfam" id="NF003974">
    <property type="entry name" value="PRK05467.1-3"/>
    <property type="match status" value="1"/>
</dbReference>
<dbReference type="NCBIfam" id="NF003975">
    <property type="entry name" value="PRK05467.1-4"/>
    <property type="match status" value="1"/>
</dbReference>
<dbReference type="PANTHER" id="PTHR41536">
    <property type="entry name" value="PKHD-TYPE HYDROXYLASE YBIX"/>
    <property type="match status" value="1"/>
</dbReference>
<dbReference type="PANTHER" id="PTHR41536:SF1">
    <property type="entry name" value="PKHD-TYPE HYDROXYLASE YBIX"/>
    <property type="match status" value="1"/>
</dbReference>
<dbReference type="Pfam" id="PF13640">
    <property type="entry name" value="2OG-FeII_Oxy_3"/>
    <property type="match status" value="1"/>
</dbReference>
<dbReference type="Pfam" id="PF18331">
    <property type="entry name" value="PKHD_C"/>
    <property type="match status" value="1"/>
</dbReference>
<dbReference type="SMART" id="SM00702">
    <property type="entry name" value="P4Hc"/>
    <property type="match status" value="1"/>
</dbReference>
<dbReference type="SUPFAM" id="SSF51197">
    <property type="entry name" value="Clavaminate synthase-like"/>
    <property type="match status" value="1"/>
</dbReference>
<dbReference type="PROSITE" id="PS51471">
    <property type="entry name" value="FE2OG_OXY"/>
    <property type="match status" value="1"/>
</dbReference>
<reference key="1">
    <citation type="journal article" date="2006" name="Proc. Natl. Acad. Sci. U.S.A.">
        <title>Burkholderia xenovorans LB400 harbors a multi-replicon, 9.73-Mbp genome shaped for versatility.</title>
        <authorList>
            <person name="Chain P.S.G."/>
            <person name="Denef V.J."/>
            <person name="Konstantinidis K.T."/>
            <person name="Vergez L.M."/>
            <person name="Agullo L."/>
            <person name="Reyes V.L."/>
            <person name="Hauser L."/>
            <person name="Cordova M."/>
            <person name="Gomez L."/>
            <person name="Gonzalez M."/>
            <person name="Land M."/>
            <person name="Lao V."/>
            <person name="Larimer F."/>
            <person name="LiPuma J.J."/>
            <person name="Mahenthiralingam E."/>
            <person name="Malfatti S.A."/>
            <person name="Marx C.J."/>
            <person name="Parnell J.J."/>
            <person name="Ramette A."/>
            <person name="Richardson P."/>
            <person name="Seeger M."/>
            <person name="Smith D."/>
            <person name="Spilker T."/>
            <person name="Sul W.J."/>
            <person name="Tsoi T.V."/>
            <person name="Ulrich L.E."/>
            <person name="Zhulin I.B."/>
            <person name="Tiedje J.M."/>
        </authorList>
    </citation>
    <scope>NUCLEOTIDE SEQUENCE [LARGE SCALE GENOMIC DNA]</scope>
    <source>
        <strain>LB400</strain>
    </source>
</reference>
<evidence type="ECO:0000255" key="1">
    <source>
        <dbReference type="HAMAP-Rule" id="MF_00657"/>
    </source>
</evidence>
<name>Y7194_PARXL</name>